<comment type="function">
    <text evidence="1">Converts 2C-methyl-D-erythritol 2,4-cyclodiphosphate (ME-2,4cPP) into 1-hydroxy-2-methyl-2-(E)-butenyl 4-diphosphate.</text>
</comment>
<comment type="catalytic activity">
    <reaction evidence="1">
        <text>(2E)-4-hydroxy-3-methylbut-2-enyl diphosphate + oxidized [flavodoxin] + H2O + 2 H(+) = 2-C-methyl-D-erythritol 2,4-cyclic diphosphate + reduced [flavodoxin]</text>
        <dbReference type="Rhea" id="RHEA:43604"/>
        <dbReference type="Rhea" id="RHEA-COMP:10622"/>
        <dbReference type="Rhea" id="RHEA-COMP:10623"/>
        <dbReference type="ChEBI" id="CHEBI:15377"/>
        <dbReference type="ChEBI" id="CHEBI:15378"/>
        <dbReference type="ChEBI" id="CHEBI:57618"/>
        <dbReference type="ChEBI" id="CHEBI:58210"/>
        <dbReference type="ChEBI" id="CHEBI:58483"/>
        <dbReference type="ChEBI" id="CHEBI:128753"/>
        <dbReference type="EC" id="1.17.7.3"/>
    </reaction>
</comment>
<comment type="cofactor">
    <cofactor evidence="1">
        <name>[4Fe-4S] cluster</name>
        <dbReference type="ChEBI" id="CHEBI:49883"/>
    </cofactor>
    <text evidence="1">Binds 1 [4Fe-4S] cluster.</text>
</comment>
<comment type="pathway">
    <text evidence="1">Isoprenoid biosynthesis; isopentenyl diphosphate biosynthesis via DXP pathway; isopentenyl diphosphate from 1-deoxy-D-xylulose 5-phosphate: step 5/6.</text>
</comment>
<comment type="similarity">
    <text evidence="1">Belongs to the IspG family.</text>
</comment>
<evidence type="ECO:0000255" key="1">
    <source>
        <dbReference type="HAMAP-Rule" id="MF_00159"/>
    </source>
</evidence>
<sequence>MHNQAPIQRRKSTRIYVGNVPIGDGAPIAVQSMTNTRTTDVEATVNQIKALERVGADIVRVSVPTMDAAEAFKLIKQQVNVPLVADIHFDYRIALKVAEYGVDCLRINPGNIGNEERIRMVVDCARDKNIPIRIGVNAGSLEKDLQEKYGEPTPQALLESAMRHVDHLDRLNFDQFKVSVKASDVFLAVESYRLLAKQIDQPLHLGITEAGGARSGAVKSAIGLGLLLSEGIGDTLRVSLAADPVEEIKVGFDILKSLRIRARGINFIACPTCSRQEFDVIGTVNALEQRLEDIITPMDVSIIGCVVNGPGEALVSTLGVTGGNKKSGLYEDGVRKDRLDNDDMIAQLESRIRAKASQLDEARRIDVLQVEK</sequence>
<dbReference type="EC" id="1.17.7.3" evidence="1"/>
<dbReference type="EMBL" id="AM933172">
    <property type="protein sequence ID" value="CAR34086.1"/>
    <property type="molecule type" value="Genomic_DNA"/>
</dbReference>
<dbReference type="RefSeq" id="WP_000551804.1">
    <property type="nucleotide sequence ID" value="NC_011294.1"/>
</dbReference>
<dbReference type="SMR" id="B5R582"/>
<dbReference type="KEGG" id="set:SEN2503"/>
<dbReference type="HOGENOM" id="CLU_042258_0_0_6"/>
<dbReference type="UniPathway" id="UPA00056">
    <property type="reaction ID" value="UER00096"/>
</dbReference>
<dbReference type="Proteomes" id="UP000000613">
    <property type="component" value="Chromosome"/>
</dbReference>
<dbReference type="GO" id="GO:0051539">
    <property type="term" value="F:4 iron, 4 sulfur cluster binding"/>
    <property type="evidence" value="ECO:0007669"/>
    <property type="project" value="UniProtKB-UniRule"/>
</dbReference>
<dbReference type="GO" id="GO:0046429">
    <property type="term" value="F:4-hydroxy-3-methylbut-2-en-1-yl diphosphate synthase activity (ferredoxin)"/>
    <property type="evidence" value="ECO:0007669"/>
    <property type="project" value="UniProtKB-UniRule"/>
</dbReference>
<dbReference type="GO" id="GO:0141197">
    <property type="term" value="F:4-hydroxy-3-methylbut-2-enyl-diphosphate synthase activity (flavodoxin)"/>
    <property type="evidence" value="ECO:0007669"/>
    <property type="project" value="UniProtKB-EC"/>
</dbReference>
<dbReference type="GO" id="GO:0005506">
    <property type="term" value="F:iron ion binding"/>
    <property type="evidence" value="ECO:0007669"/>
    <property type="project" value="InterPro"/>
</dbReference>
<dbReference type="GO" id="GO:0019288">
    <property type="term" value="P:isopentenyl diphosphate biosynthetic process, methylerythritol 4-phosphate pathway"/>
    <property type="evidence" value="ECO:0007669"/>
    <property type="project" value="UniProtKB-UniRule"/>
</dbReference>
<dbReference type="GO" id="GO:0016114">
    <property type="term" value="P:terpenoid biosynthetic process"/>
    <property type="evidence" value="ECO:0007669"/>
    <property type="project" value="InterPro"/>
</dbReference>
<dbReference type="FunFam" id="3.20.20.20:FF:000001">
    <property type="entry name" value="4-hydroxy-3-methylbut-2-en-1-yl diphosphate synthase (flavodoxin)"/>
    <property type="match status" value="1"/>
</dbReference>
<dbReference type="FunFam" id="3.30.413.10:FF:000002">
    <property type="entry name" value="4-hydroxy-3-methylbut-2-en-1-yl diphosphate synthase (flavodoxin)"/>
    <property type="match status" value="1"/>
</dbReference>
<dbReference type="Gene3D" id="3.20.20.20">
    <property type="entry name" value="Dihydropteroate synthase-like"/>
    <property type="match status" value="1"/>
</dbReference>
<dbReference type="Gene3D" id="3.30.413.10">
    <property type="entry name" value="Sulfite Reductase Hemoprotein, domain 1"/>
    <property type="match status" value="1"/>
</dbReference>
<dbReference type="HAMAP" id="MF_00159">
    <property type="entry name" value="IspG"/>
    <property type="match status" value="1"/>
</dbReference>
<dbReference type="InterPro" id="IPR011005">
    <property type="entry name" value="Dihydropteroate_synth-like_sf"/>
</dbReference>
<dbReference type="InterPro" id="IPR016425">
    <property type="entry name" value="IspG_bac"/>
</dbReference>
<dbReference type="InterPro" id="IPR004588">
    <property type="entry name" value="IspG_bac-typ"/>
</dbReference>
<dbReference type="InterPro" id="IPR045854">
    <property type="entry name" value="NO2/SO3_Rdtase_4Fe4S_sf"/>
</dbReference>
<dbReference type="NCBIfam" id="TIGR00612">
    <property type="entry name" value="ispG_gcpE"/>
    <property type="match status" value="1"/>
</dbReference>
<dbReference type="NCBIfam" id="NF001540">
    <property type="entry name" value="PRK00366.1"/>
    <property type="match status" value="1"/>
</dbReference>
<dbReference type="PANTHER" id="PTHR30454">
    <property type="entry name" value="4-HYDROXY-3-METHYLBUT-2-EN-1-YL DIPHOSPHATE SYNTHASE"/>
    <property type="match status" value="1"/>
</dbReference>
<dbReference type="PANTHER" id="PTHR30454:SF0">
    <property type="entry name" value="4-HYDROXY-3-METHYLBUT-2-EN-1-YL DIPHOSPHATE SYNTHASE (FERREDOXIN), CHLOROPLASTIC"/>
    <property type="match status" value="1"/>
</dbReference>
<dbReference type="Pfam" id="PF04551">
    <property type="entry name" value="GcpE"/>
    <property type="match status" value="1"/>
</dbReference>
<dbReference type="PIRSF" id="PIRSF004640">
    <property type="entry name" value="IspG"/>
    <property type="match status" value="1"/>
</dbReference>
<dbReference type="SUPFAM" id="SSF51717">
    <property type="entry name" value="Dihydropteroate synthetase-like"/>
    <property type="match status" value="1"/>
</dbReference>
<dbReference type="SUPFAM" id="SSF56014">
    <property type="entry name" value="Nitrite and sulphite reductase 4Fe-4S domain-like"/>
    <property type="match status" value="1"/>
</dbReference>
<organism>
    <name type="scientific">Salmonella enteritidis PT4 (strain P125109)</name>
    <dbReference type="NCBI Taxonomy" id="550537"/>
    <lineage>
        <taxon>Bacteria</taxon>
        <taxon>Pseudomonadati</taxon>
        <taxon>Pseudomonadota</taxon>
        <taxon>Gammaproteobacteria</taxon>
        <taxon>Enterobacterales</taxon>
        <taxon>Enterobacteriaceae</taxon>
        <taxon>Salmonella</taxon>
    </lineage>
</organism>
<reference key="1">
    <citation type="journal article" date="2008" name="Genome Res.">
        <title>Comparative genome analysis of Salmonella enteritidis PT4 and Salmonella gallinarum 287/91 provides insights into evolutionary and host adaptation pathways.</title>
        <authorList>
            <person name="Thomson N.R."/>
            <person name="Clayton D.J."/>
            <person name="Windhorst D."/>
            <person name="Vernikos G."/>
            <person name="Davidson S."/>
            <person name="Churcher C."/>
            <person name="Quail M.A."/>
            <person name="Stevens M."/>
            <person name="Jones M.A."/>
            <person name="Watson M."/>
            <person name="Barron A."/>
            <person name="Layton A."/>
            <person name="Pickard D."/>
            <person name="Kingsley R.A."/>
            <person name="Bignell A."/>
            <person name="Clark L."/>
            <person name="Harris B."/>
            <person name="Ormond D."/>
            <person name="Abdellah Z."/>
            <person name="Brooks K."/>
            <person name="Cherevach I."/>
            <person name="Chillingworth T."/>
            <person name="Woodward J."/>
            <person name="Norberczak H."/>
            <person name="Lord A."/>
            <person name="Arrowsmith C."/>
            <person name="Jagels K."/>
            <person name="Moule S."/>
            <person name="Mungall K."/>
            <person name="Saunders M."/>
            <person name="Whitehead S."/>
            <person name="Chabalgoity J.A."/>
            <person name="Maskell D."/>
            <person name="Humphreys T."/>
            <person name="Roberts M."/>
            <person name="Barrow P.A."/>
            <person name="Dougan G."/>
            <person name="Parkhill J."/>
        </authorList>
    </citation>
    <scope>NUCLEOTIDE SEQUENCE [LARGE SCALE GENOMIC DNA]</scope>
    <source>
        <strain>P125109</strain>
    </source>
</reference>
<name>ISPG_SALEP</name>
<feature type="chain" id="PRO_1000097180" description="4-hydroxy-3-methylbut-2-en-1-yl diphosphate synthase (flavodoxin)">
    <location>
        <begin position="1"/>
        <end position="372"/>
    </location>
</feature>
<feature type="binding site" evidence="1">
    <location>
        <position position="270"/>
    </location>
    <ligand>
        <name>[4Fe-4S] cluster</name>
        <dbReference type="ChEBI" id="CHEBI:49883"/>
    </ligand>
</feature>
<feature type="binding site" evidence="1">
    <location>
        <position position="273"/>
    </location>
    <ligand>
        <name>[4Fe-4S] cluster</name>
        <dbReference type="ChEBI" id="CHEBI:49883"/>
    </ligand>
</feature>
<feature type="binding site" evidence="1">
    <location>
        <position position="305"/>
    </location>
    <ligand>
        <name>[4Fe-4S] cluster</name>
        <dbReference type="ChEBI" id="CHEBI:49883"/>
    </ligand>
</feature>
<feature type="binding site" evidence="1">
    <location>
        <position position="312"/>
    </location>
    <ligand>
        <name>[4Fe-4S] cluster</name>
        <dbReference type="ChEBI" id="CHEBI:49883"/>
    </ligand>
</feature>
<proteinExistence type="inferred from homology"/>
<keyword id="KW-0004">4Fe-4S</keyword>
<keyword id="KW-0408">Iron</keyword>
<keyword id="KW-0411">Iron-sulfur</keyword>
<keyword id="KW-0414">Isoprene biosynthesis</keyword>
<keyword id="KW-0479">Metal-binding</keyword>
<keyword id="KW-0560">Oxidoreductase</keyword>
<gene>
    <name evidence="1" type="primary">ispG</name>
    <name type="ordered locus">SEN2503</name>
</gene>
<accession>B5R582</accession>
<protein>
    <recommendedName>
        <fullName evidence="1">4-hydroxy-3-methylbut-2-en-1-yl diphosphate synthase (flavodoxin)</fullName>
        <ecNumber evidence="1">1.17.7.3</ecNumber>
    </recommendedName>
    <alternativeName>
        <fullName evidence="1">1-hydroxy-2-methyl-2-(E)-butenyl 4-diphosphate synthase</fullName>
    </alternativeName>
</protein>